<dbReference type="EMBL" id="U19853">
    <property type="protein sequence ID" value="AAA86715.1"/>
    <property type="molecule type" value="mRNA"/>
</dbReference>
<dbReference type="RefSeq" id="NP_001292822.1">
    <property type="nucleotide sequence ID" value="NM_001305893.1"/>
</dbReference>
<dbReference type="SMR" id="P51493"/>
<dbReference type="STRING" id="9545.ENSMNEP00000033521"/>
<dbReference type="GeneID" id="105471787"/>
<dbReference type="KEGG" id="mni:105471787"/>
<dbReference type="CTD" id="3553"/>
<dbReference type="OrthoDB" id="7228at314294"/>
<dbReference type="Proteomes" id="UP000233120">
    <property type="component" value="Unassembled WGS sequence"/>
</dbReference>
<dbReference type="GO" id="GO:0005829">
    <property type="term" value="C:cytosol"/>
    <property type="evidence" value="ECO:0007669"/>
    <property type="project" value="UniProtKB-SubCell"/>
</dbReference>
<dbReference type="GO" id="GO:0005615">
    <property type="term" value="C:extracellular space"/>
    <property type="evidence" value="ECO:0007669"/>
    <property type="project" value="UniProtKB-KW"/>
</dbReference>
<dbReference type="GO" id="GO:0005764">
    <property type="term" value="C:lysosome"/>
    <property type="evidence" value="ECO:0007669"/>
    <property type="project" value="UniProtKB-SubCell"/>
</dbReference>
<dbReference type="GO" id="GO:0005125">
    <property type="term" value="F:cytokine activity"/>
    <property type="evidence" value="ECO:0007669"/>
    <property type="project" value="UniProtKB-KW"/>
</dbReference>
<dbReference type="GO" id="GO:0005178">
    <property type="term" value="F:integrin binding"/>
    <property type="evidence" value="ECO:0000250"/>
    <property type="project" value="UniProtKB"/>
</dbReference>
<dbReference type="GO" id="GO:0005149">
    <property type="term" value="F:interleukin-1 receptor binding"/>
    <property type="evidence" value="ECO:0007669"/>
    <property type="project" value="InterPro"/>
</dbReference>
<dbReference type="GO" id="GO:0071222">
    <property type="term" value="P:cellular response to lipopolysaccharide"/>
    <property type="evidence" value="ECO:0007669"/>
    <property type="project" value="TreeGrafter"/>
</dbReference>
<dbReference type="GO" id="GO:0019221">
    <property type="term" value="P:cytokine-mediated signaling pathway"/>
    <property type="evidence" value="ECO:0007669"/>
    <property type="project" value="TreeGrafter"/>
</dbReference>
<dbReference type="GO" id="GO:0001660">
    <property type="term" value="P:fever generation"/>
    <property type="evidence" value="ECO:0007669"/>
    <property type="project" value="UniProtKB-KW"/>
</dbReference>
<dbReference type="GO" id="GO:0006955">
    <property type="term" value="P:immune response"/>
    <property type="evidence" value="ECO:0007669"/>
    <property type="project" value="InterPro"/>
</dbReference>
<dbReference type="GO" id="GO:0051781">
    <property type="term" value="P:positive regulation of cell division"/>
    <property type="evidence" value="ECO:0007669"/>
    <property type="project" value="UniProtKB-KW"/>
</dbReference>
<dbReference type="GO" id="GO:0033092">
    <property type="term" value="P:positive regulation of immature T cell proliferation in thymus"/>
    <property type="evidence" value="ECO:0007669"/>
    <property type="project" value="TreeGrafter"/>
</dbReference>
<dbReference type="GO" id="GO:2000556">
    <property type="term" value="P:positive regulation of T-helper 1 cell cytokine production"/>
    <property type="evidence" value="ECO:0000250"/>
    <property type="project" value="UniProtKB"/>
</dbReference>
<dbReference type="GO" id="GO:0032729">
    <property type="term" value="P:positive regulation of type II interferon production"/>
    <property type="evidence" value="ECO:0000250"/>
    <property type="project" value="UniProtKB"/>
</dbReference>
<dbReference type="GO" id="GO:0010573">
    <property type="term" value="P:vascular endothelial growth factor production"/>
    <property type="evidence" value="ECO:0000250"/>
    <property type="project" value="UniProtKB"/>
</dbReference>
<dbReference type="CDD" id="cd23296">
    <property type="entry name" value="beta-trefoil_IL1B"/>
    <property type="match status" value="1"/>
</dbReference>
<dbReference type="FunFam" id="2.80.10.50:FF:000027">
    <property type="entry name" value="Interleukin-1 beta"/>
    <property type="match status" value="1"/>
</dbReference>
<dbReference type="Gene3D" id="2.80.10.50">
    <property type="match status" value="1"/>
</dbReference>
<dbReference type="InterPro" id="IPR020877">
    <property type="entry name" value="IL-1_CS"/>
</dbReference>
<dbReference type="InterPro" id="IPR000975">
    <property type="entry name" value="IL-1_fam"/>
</dbReference>
<dbReference type="InterPro" id="IPR003502">
    <property type="entry name" value="IL-1_propep"/>
</dbReference>
<dbReference type="InterPro" id="IPR008996">
    <property type="entry name" value="IL1/FGF"/>
</dbReference>
<dbReference type="PANTHER" id="PTHR10078:SF30">
    <property type="entry name" value="INTERLEUKIN-1 BETA"/>
    <property type="match status" value="1"/>
</dbReference>
<dbReference type="PANTHER" id="PTHR10078">
    <property type="entry name" value="INTERLEUKIN-1 FAMILY MEMBER"/>
    <property type="match status" value="1"/>
</dbReference>
<dbReference type="Pfam" id="PF00340">
    <property type="entry name" value="IL1"/>
    <property type="match status" value="1"/>
</dbReference>
<dbReference type="Pfam" id="PF02394">
    <property type="entry name" value="IL1_propep"/>
    <property type="match status" value="1"/>
</dbReference>
<dbReference type="PRINTS" id="PR00262">
    <property type="entry name" value="IL1HBGF"/>
</dbReference>
<dbReference type="PRINTS" id="PR00264">
    <property type="entry name" value="INTERLEUKIN1"/>
</dbReference>
<dbReference type="PRINTS" id="PR01359">
    <property type="entry name" value="INTRLEUKIN1B"/>
</dbReference>
<dbReference type="PRINTS" id="PR01357">
    <property type="entry name" value="INTRLEUKN1AB"/>
</dbReference>
<dbReference type="SMART" id="SM00125">
    <property type="entry name" value="IL1"/>
    <property type="match status" value="1"/>
</dbReference>
<dbReference type="SUPFAM" id="SSF50353">
    <property type="entry name" value="Cytokine"/>
    <property type="match status" value="1"/>
</dbReference>
<dbReference type="PROSITE" id="PS00253">
    <property type="entry name" value="INTERLEUKIN_1"/>
    <property type="match status" value="1"/>
</dbReference>
<comment type="function">
    <text evidence="2">Potent pro-inflammatory cytokine. Initially discovered as the major endogenous pyrogen, induces prostaglandin synthesis, neutrophil influx and activation, T-cell activation and cytokine production, B-cell activation and antibody production, and fibroblast proliferation and collagen production. Promotes Th17 differentiation of T-cells. Synergizes with IL12/interleukin-12 to induce IFNG synthesis from T-helper 1 (Th1) cells. Plays a role in angiogenesis by inducing VEGF production synergistically with TNF and IL6. Involved in transduction of inflammation downstream of pyroptosis: its mature form is specifically released in the extracellular milieu by passing through the gasdermin-D (GSDMD) pore.</text>
</comment>
<comment type="subunit">
    <text evidence="2">Monomer. In its precursor form, weakly interacts with full-length MEFV; the mature cytokine does not interact at all. Interacts with integrins ITGAV:ITGBV and ITGA5:ITGB1; integrin-binding is required for IL1B signaling. Interacts with cargo receptor TMED10; the interaction is direct and is required for the secretion of IL1B mature form. Interacts with HSP90AB1; the interaction facilitates cargo translocation into the ERGIC. Interacts with HSP90B1; the interaction facilitates cargo translocation into the ERGIC.</text>
</comment>
<comment type="subcellular location">
    <subcellularLocation>
        <location evidence="2">Cytoplasm</location>
        <location evidence="2">Cytosol</location>
    </subcellularLocation>
    <subcellularLocation>
        <location evidence="2">Secreted</location>
    </subcellularLocation>
    <subcellularLocation>
        <location evidence="2">Lysosome</location>
    </subcellularLocation>
    <subcellularLocation>
        <location evidence="3">Secreted</location>
        <location evidence="3">Extracellular exosome</location>
    </subcellularLocation>
    <text evidence="2">The precursor is cytosolic. In response to inflammasome-activating signals, such as ATP for NLRP3 inflammasome or bacterial flagellin for NLRC4 inflammasome, cleaved and secreted. Mature form is secreted and released in the extracellular milieu by passing through the gasdermin-D (GSDMD) pore. In contrast, the precursor form is not released, due to the presence of an acidic region that is proteolytically removed by CASP1 during maturation. The secretion is dependent on protein unfolding and facilitated by the cargo receptor TMED10.</text>
</comment>
<comment type="miscellaneous">
    <text evidence="1">IL1B production occurs in 2 steps, each being controlled by different stimuli. First, inflammatory signals, such as LPS, stimulate the synthesis and promote the accumulation of cytosolic stores of pro-IL1B (priming). Then additional signals are required for inflammasome assembly, leading to CASP1 activation, pro-IL1B processing and eventually secretion of the active cytokine. IL1B processing and secretion are temporarily associated.</text>
</comment>
<comment type="similarity">
    <text evidence="4">Belongs to the IL-1 family.</text>
</comment>
<reference key="1">
    <citation type="journal article" date="1995" name="J. Immunol.">
        <title>Comparative sequence analysis of cytokine genes from human and nonhuman primates.</title>
        <authorList>
            <person name="Villinger F.J."/>
            <person name="Brar S.S."/>
            <person name="Mayne A.E."/>
            <person name="Chikkala N."/>
            <person name="Ansari A.A."/>
        </authorList>
    </citation>
    <scope>NUCLEOTIDE SEQUENCE [MRNA]</scope>
    <source>
        <tissue>Blood</tissue>
    </source>
</reference>
<name>IL1B_MACNE</name>
<keyword id="KW-0202">Cytokine</keyword>
<keyword id="KW-0963">Cytoplasm</keyword>
<keyword id="KW-0395">Inflammatory response</keyword>
<keyword id="KW-0458">Lysosome</keyword>
<keyword id="KW-0497">Mitogen</keyword>
<keyword id="KW-0666">Pyrogen</keyword>
<keyword id="KW-1185">Reference proteome</keyword>
<keyword id="KW-0964">Secreted</keyword>
<organism>
    <name type="scientific">Macaca nemestrina</name>
    <name type="common">Pig-tailed macaque</name>
    <dbReference type="NCBI Taxonomy" id="9545"/>
    <lineage>
        <taxon>Eukaryota</taxon>
        <taxon>Metazoa</taxon>
        <taxon>Chordata</taxon>
        <taxon>Craniata</taxon>
        <taxon>Vertebrata</taxon>
        <taxon>Euteleostomi</taxon>
        <taxon>Mammalia</taxon>
        <taxon>Eutheria</taxon>
        <taxon>Euarchontoglires</taxon>
        <taxon>Primates</taxon>
        <taxon>Haplorrhini</taxon>
        <taxon>Catarrhini</taxon>
        <taxon>Cercopithecidae</taxon>
        <taxon>Cercopithecinae</taxon>
        <taxon>Macaca</taxon>
    </lineage>
</organism>
<proteinExistence type="evidence at transcript level"/>
<sequence length="269" mass="30612">MAEVPELASEMMAYYSGNEDDLFFEVDGPKQMKCSFQDLDLCPLDGGIQLQISHEHYNKGFRQAVSVVVAMEKLRKMLVPCPQIFQDNDLSTLIPFIFEEEPVFLDTRNNDACVHDAPVRSLHCTLRDAQLKSLVMSGPYELKALHLQGQDLEQQVVFFMSFVQGEESNDKIPVALGLKAKNLYLSCVLKDDKPTLQLESVDPKNYPKKKMEKRFVFNKIEINNKLEFESAQFPNWYISTSQAENMPVFLGGTRGGQDITDFTMQFVSS</sequence>
<protein>
    <recommendedName>
        <fullName>Interleukin-1 beta</fullName>
        <shortName>IL-1 beta</shortName>
    </recommendedName>
</protein>
<accession>P51493</accession>
<feature type="propeptide" id="PRO_0000015309" evidence="1">
    <location>
        <begin position="1"/>
        <end position="116"/>
    </location>
</feature>
<feature type="chain" id="PRO_0000015310" description="Interleukin-1 beta">
    <location>
        <begin position="117"/>
        <end position="269"/>
    </location>
</feature>
<feature type="site" description="Important for interaction with integrin" evidence="2">
    <location>
        <position position="171"/>
    </location>
</feature>
<feature type="site" description="Important for interaction with integrin" evidence="2">
    <location>
        <position position="179"/>
    </location>
</feature>
<feature type="site" description="Important for interaction with integrin" evidence="2">
    <location>
        <position position="181"/>
    </location>
</feature>
<feature type="site" description="Important for interaction with integrin" evidence="2">
    <location>
        <position position="190"/>
    </location>
</feature>
<feature type="site" description="Important for interaction with integrin" evidence="2">
    <location>
        <position position="204"/>
    </location>
</feature>
<evidence type="ECO:0000250" key="1"/>
<evidence type="ECO:0000250" key="2">
    <source>
        <dbReference type="UniProtKB" id="P01584"/>
    </source>
</evidence>
<evidence type="ECO:0000250" key="3">
    <source>
        <dbReference type="UniProtKB" id="P10749"/>
    </source>
</evidence>
<evidence type="ECO:0000305" key="4"/>
<gene>
    <name type="primary">IL1B</name>
</gene>